<dbReference type="EMBL" id="AY677149">
    <property type="protein sequence ID" value="AAV28577.1"/>
    <property type="molecule type" value="Genomic_DNA"/>
</dbReference>
<dbReference type="SMR" id="Q5Y4Z8"/>
<dbReference type="GlyCosmos" id="Q5Y4Z8">
    <property type="glycosylation" value="1 site, No reported glycans"/>
</dbReference>
<dbReference type="eggNOG" id="ENOG502TE6U">
    <property type="taxonomic scope" value="Eukaryota"/>
</dbReference>
<dbReference type="Proteomes" id="UP000240080">
    <property type="component" value="Unplaced"/>
</dbReference>
<dbReference type="GO" id="GO:0005886">
    <property type="term" value="C:plasma membrane"/>
    <property type="evidence" value="ECO:0007669"/>
    <property type="project" value="UniProtKB-ARBA"/>
</dbReference>
<dbReference type="GO" id="GO:0033038">
    <property type="term" value="F:bitter taste receptor activity"/>
    <property type="evidence" value="ECO:0007669"/>
    <property type="project" value="InterPro"/>
</dbReference>
<dbReference type="GO" id="GO:0004930">
    <property type="term" value="F:G protein-coupled receptor activity"/>
    <property type="evidence" value="ECO:0007669"/>
    <property type="project" value="UniProtKB-KW"/>
</dbReference>
<dbReference type="CDD" id="cd15027">
    <property type="entry name" value="7tm_TAS2R43-like"/>
    <property type="match status" value="1"/>
</dbReference>
<dbReference type="FunFam" id="1.20.1070.10:FF:000042">
    <property type="entry name" value="Taste receptor type 2 member 7"/>
    <property type="match status" value="1"/>
</dbReference>
<dbReference type="Gene3D" id="1.20.1070.10">
    <property type="entry name" value="Rhodopsin 7-helix transmembrane proteins"/>
    <property type="match status" value="1"/>
</dbReference>
<dbReference type="InterPro" id="IPR007960">
    <property type="entry name" value="TAS2R"/>
</dbReference>
<dbReference type="PANTHER" id="PTHR11394">
    <property type="entry name" value="TASTE RECEPTOR TYPE 2"/>
    <property type="match status" value="1"/>
</dbReference>
<dbReference type="PANTHER" id="PTHR11394:SF134">
    <property type="entry name" value="TASTE RECEPTOR TYPE 2 MEMBER 45"/>
    <property type="match status" value="1"/>
</dbReference>
<dbReference type="Pfam" id="PF05296">
    <property type="entry name" value="TAS2R"/>
    <property type="match status" value="1"/>
</dbReference>
<dbReference type="SUPFAM" id="SSF81321">
    <property type="entry name" value="Family A G protein-coupled receptor-like"/>
    <property type="match status" value="1"/>
</dbReference>
<protein>
    <recommendedName>
        <fullName>Taste receptor type 2 member 45</fullName>
        <shortName>T2R45</shortName>
    </recommendedName>
</protein>
<organism>
    <name type="scientific">Pan paniscus</name>
    <name type="common">Pygmy chimpanzee</name>
    <name type="synonym">Bonobo</name>
    <dbReference type="NCBI Taxonomy" id="9597"/>
    <lineage>
        <taxon>Eukaryota</taxon>
        <taxon>Metazoa</taxon>
        <taxon>Chordata</taxon>
        <taxon>Craniata</taxon>
        <taxon>Vertebrata</taxon>
        <taxon>Euteleostomi</taxon>
        <taxon>Mammalia</taxon>
        <taxon>Eutheria</taxon>
        <taxon>Euarchontoglires</taxon>
        <taxon>Primates</taxon>
        <taxon>Haplorrhini</taxon>
        <taxon>Catarrhini</taxon>
        <taxon>Hominidae</taxon>
        <taxon>Pan</taxon>
    </lineage>
</organism>
<keyword id="KW-0297">G-protein coupled receptor</keyword>
<keyword id="KW-0325">Glycoprotein</keyword>
<keyword id="KW-0472">Membrane</keyword>
<keyword id="KW-0675">Receptor</keyword>
<keyword id="KW-1185">Reference proteome</keyword>
<keyword id="KW-0716">Sensory transduction</keyword>
<keyword id="KW-0919">Taste</keyword>
<keyword id="KW-0807">Transducer</keyword>
<keyword id="KW-0812">Transmembrane</keyword>
<keyword id="KW-1133">Transmembrane helix</keyword>
<reference key="1">
    <citation type="journal article" date="2004" name="Proc. Natl. Acad. Sci. U.S.A.">
        <title>Divergence of T2R chemosensory receptor families in humans, bonobos, and chimpanzees.</title>
        <authorList>
            <person name="Parry C.M."/>
            <person name="Erkner A."/>
            <person name="le Coutre J."/>
        </authorList>
    </citation>
    <scope>NUCLEOTIDE SEQUENCE [GENOMIC DNA]</scope>
</reference>
<comment type="function">
    <text evidence="1">Receptor that may play a role in the perception of bitterness and is gustducin-linked. May play a role in sensing the chemical composition of the gastrointestinal content. The activity of this receptor may stimulate alpha gustducin, mediate PLC-beta-2 activation and lead to the gating of TRPM5 (By similarity).</text>
</comment>
<comment type="subcellular location">
    <subcellularLocation>
        <location>Membrane</location>
        <topology>Multi-pass membrane protein</topology>
    </subcellularLocation>
</comment>
<comment type="miscellaneous">
    <text>Most taste cells may be activated by a limited number of bitter compounds; individual taste cells can discriminate among bitter stimuli.</text>
</comment>
<comment type="similarity">
    <text evidence="3">Belongs to the G-protein coupled receptor T2R family.</text>
</comment>
<name>T2R45_PANPA</name>
<accession>Q5Y4Z8</accession>
<proteinExistence type="inferred from homology"/>
<feature type="chain" id="PRO_0000082316" description="Taste receptor type 2 member 45">
    <location>
        <begin position="1"/>
        <end position="309"/>
    </location>
</feature>
<feature type="topological domain" description="Extracellular" evidence="2">
    <location>
        <position position="1"/>
    </location>
</feature>
<feature type="transmembrane region" description="Helical; Name=1" evidence="2">
    <location>
        <begin position="2"/>
        <end position="22"/>
    </location>
</feature>
<feature type="topological domain" description="Cytoplasmic" evidence="2">
    <location>
        <begin position="23"/>
        <end position="55"/>
    </location>
</feature>
<feature type="transmembrane region" description="Helical; Name=2" evidence="2">
    <location>
        <begin position="56"/>
        <end position="76"/>
    </location>
</feature>
<feature type="topological domain" description="Extracellular" evidence="2">
    <location>
        <begin position="77"/>
        <end position="98"/>
    </location>
</feature>
<feature type="transmembrane region" description="Helical; Name=3" evidence="2">
    <location>
        <begin position="99"/>
        <end position="119"/>
    </location>
</feature>
<feature type="topological domain" description="Cytoplasmic" evidence="2">
    <location>
        <begin position="120"/>
        <end position="126"/>
    </location>
</feature>
<feature type="transmembrane region" description="Helical; Name=4" evidence="2">
    <location>
        <begin position="127"/>
        <end position="147"/>
    </location>
</feature>
<feature type="topological domain" description="Extracellular" evidence="2">
    <location>
        <begin position="148"/>
        <end position="178"/>
    </location>
</feature>
<feature type="transmembrane region" description="Helical; Name=5" evidence="2">
    <location>
        <begin position="179"/>
        <end position="199"/>
    </location>
</feature>
<feature type="topological domain" description="Cytoplasmic" evidence="2">
    <location>
        <begin position="200"/>
        <end position="229"/>
    </location>
</feature>
<feature type="transmembrane region" description="Helical; Name=6" evidence="2">
    <location>
        <begin position="230"/>
        <end position="250"/>
    </location>
</feature>
<feature type="topological domain" description="Extracellular" evidence="2">
    <location>
        <begin position="251"/>
        <end position="259"/>
    </location>
</feature>
<feature type="transmembrane region" description="Helical; Name=7" evidence="2">
    <location>
        <begin position="260"/>
        <end position="280"/>
    </location>
</feature>
<feature type="topological domain" description="Cytoplasmic" evidence="2">
    <location>
        <begin position="281"/>
        <end position="309"/>
    </location>
</feature>
<feature type="glycosylation site" description="N-linked (GlcNAc...) asparagine" evidence="2">
    <location>
        <position position="161"/>
    </location>
</feature>
<gene>
    <name type="primary">TAS2R45</name>
</gene>
<evidence type="ECO:0000250" key="1"/>
<evidence type="ECO:0000255" key="2"/>
<evidence type="ECO:0000305" key="3"/>
<sequence length="309" mass="35319">MITFLPIIFSILVVVTFVIGNFANGFIALVNSTEWVKRQKISFADQIVTALAVSRVGLLWVLLLNWYSTVLNPAFYSVELRTTAYNIWAVTGHFSNWLATSLSIFYLLKIANFSNLIFLHLKRRVKSVILVMLLGPLLFLACHLFVVNMNQIVWTKEYEGNMTWKIKLRRAMYLSDTTVTMLANLVPFTVTLISFLLLVCSLCEHLKKMQLHGKGSQDPSTKVHIKALQTVISFLLLCAIYFVSVIISVWSFKNLENKPVFMFCQAIGFSCSSAHPFILIWGNKKLKQPFLSVLWQMRYWVKGEKPSSS</sequence>